<accession>Q8IWQ3</accession>
<accession>B3KVE9</accession>
<accession>E9PLM7</accession>
<accession>O60843</accession>
<accession>O95099</accession>
<accession>Q5J5B4</accession>
<accession>Q6ZMQ4</accession>
<accession>Q8TB60</accession>
<gene>
    <name type="primary">BRSK2</name>
    <name type="synonym">C11orf7</name>
    <name type="synonym">PEN11B</name>
    <name type="synonym">SADA</name>
    <name type="synonym">STK29</name>
    <name type="ORF">HUSSY-12</name>
</gene>
<dbReference type="EC" id="2.7.11.1"/>
<dbReference type="EC" id="2.7.11.26"/>
<dbReference type="EMBL" id="AY505125">
    <property type="protein sequence ID" value="AAS86443.1"/>
    <property type="molecule type" value="mRNA"/>
</dbReference>
<dbReference type="EMBL" id="AF533876">
    <property type="protein sequence ID" value="AAP97723.1"/>
    <property type="molecule type" value="mRNA"/>
</dbReference>
<dbReference type="EMBL" id="AF533877">
    <property type="protein sequence ID" value="AAP97724.1"/>
    <property type="molecule type" value="mRNA"/>
</dbReference>
<dbReference type="EMBL" id="AF533878">
    <property type="protein sequence ID" value="AAP97725.1"/>
    <property type="molecule type" value="mRNA"/>
</dbReference>
<dbReference type="EMBL" id="AF533879">
    <property type="protein sequence ID" value="AAP97726.1"/>
    <property type="molecule type" value="mRNA"/>
</dbReference>
<dbReference type="EMBL" id="AF533880">
    <property type="protein sequence ID" value="AAP97727.1"/>
    <property type="molecule type" value="mRNA"/>
</dbReference>
<dbReference type="EMBL" id="AY166857">
    <property type="protein sequence ID" value="AAN87839.1"/>
    <property type="molecule type" value="mRNA"/>
</dbReference>
<dbReference type="EMBL" id="AK122851">
    <property type="protein sequence ID" value="BAG53761.1"/>
    <property type="molecule type" value="mRNA"/>
</dbReference>
<dbReference type="EMBL" id="AK131534">
    <property type="protein sequence ID" value="BAD18671.1"/>
    <property type="molecule type" value="mRNA"/>
</dbReference>
<dbReference type="EMBL" id="AC091196">
    <property type="status" value="NOT_ANNOTATED_CDS"/>
    <property type="molecule type" value="Genomic_DNA"/>
</dbReference>
<dbReference type="EMBL" id="AC136297">
    <property type="status" value="NOT_ANNOTATED_CDS"/>
    <property type="molecule type" value="Genomic_DNA"/>
</dbReference>
<dbReference type="EMBL" id="AJ006701">
    <property type="protein sequence ID" value="CAA07196.1"/>
    <property type="molecule type" value="mRNA"/>
</dbReference>
<dbReference type="EMBL" id="BC024291">
    <property type="protein sequence ID" value="AAH24291.1"/>
    <property type="status" value="ALT_INIT"/>
    <property type="molecule type" value="mRNA"/>
</dbReference>
<dbReference type="EMBL" id="AF020089">
    <property type="protein sequence ID" value="AAD09654.1"/>
    <property type="status" value="ALT_SEQ"/>
    <property type="molecule type" value="mRNA"/>
</dbReference>
<dbReference type="CCDS" id="CCDS41590.1">
    <molecule id="Q8IWQ3-3"/>
</dbReference>
<dbReference type="CCDS" id="CCDS58106.1">
    <molecule id="Q8IWQ3-2"/>
</dbReference>
<dbReference type="CCDS" id="CCDS58107.1">
    <molecule id="Q8IWQ3-1"/>
</dbReference>
<dbReference type="CCDS" id="CCDS58108.1">
    <molecule id="Q8IWQ3-5"/>
</dbReference>
<dbReference type="CCDS" id="CCDS60696.1">
    <molecule id="Q8IWQ3-6"/>
</dbReference>
<dbReference type="RefSeq" id="NP_001243556.1">
    <molecule id="Q8IWQ3-1"/>
    <property type="nucleotide sequence ID" value="NM_001256627.2"/>
</dbReference>
<dbReference type="RefSeq" id="NP_001243558.1">
    <molecule id="Q8IWQ3-2"/>
    <property type="nucleotide sequence ID" value="NM_001256629.2"/>
</dbReference>
<dbReference type="RefSeq" id="NP_001243559.1">
    <molecule id="Q8IWQ3-5"/>
    <property type="nucleotide sequence ID" value="NM_001256630.1"/>
</dbReference>
<dbReference type="RefSeq" id="NP_001269147.1">
    <molecule id="Q8IWQ3-6"/>
    <property type="nucleotide sequence ID" value="NM_001282218.2"/>
</dbReference>
<dbReference type="RefSeq" id="NP_003948.2">
    <molecule id="Q8IWQ3-3"/>
    <property type="nucleotide sequence ID" value="NM_003957.4"/>
</dbReference>
<dbReference type="SMR" id="Q8IWQ3"/>
<dbReference type="BioGRID" id="114491">
    <property type="interactions" value="26"/>
</dbReference>
<dbReference type="FunCoup" id="Q8IWQ3">
    <property type="interactions" value="1624"/>
</dbReference>
<dbReference type="IntAct" id="Q8IWQ3">
    <property type="interactions" value="11"/>
</dbReference>
<dbReference type="MINT" id="Q8IWQ3"/>
<dbReference type="STRING" id="9606.ENSP00000371614"/>
<dbReference type="BindingDB" id="Q8IWQ3"/>
<dbReference type="ChEMBL" id="CHEMBL4574"/>
<dbReference type="DrugCentral" id="Q8IWQ3"/>
<dbReference type="GuidetoPHARMACOLOGY" id="1947"/>
<dbReference type="GlyGen" id="Q8IWQ3">
    <property type="glycosylation" value="2 sites, 1 O-linked glycan (1 site)"/>
</dbReference>
<dbReference type="iPTMnet" id="Q8IWQ3"/>
<dbReference type="PhosphoSitePlus" id="Q8IWQ3"/>
<dbReference type="SwissPalm" id="Q8IWQ3"/>
<dbReference type="BioMuta" id="BRSK2"/>
<dbReference type="DMDM" id="116241272"/>
<dbReference type="CPTAC" id="non-CPTAC-6014"/>
<dbReference type="CPTAC" id="non-CPTAC-6015"/>
<dbReference type="jPOST" id="Q8IWQ3"/>
<dbReference type="MassIVE" id="Q8IWQ3"/>
<dbReference type="PaxDb" id="9606-ENSP00000371614"/>
<dbReference type="PeptideAtlas" id="Q8IWQ3"/>
<dbReference type="ProteomicsDB" id="21843"/>
<dbReference type="ProteomicsDB" id="70877">
    <molecule id="Q8IWQ3-1"/>
</dbReference>
<dbReference type="ProteomicsDB" id="70878">
    <molecule id="Q8IWQ3-2"/>
</dbReference>
<dbReference type="ProteomicsDB" id="70879">
    <molecule id="Q8IWQ3-3"/>
</dbReference>
<dbReference type="ProteomicsDB" id="70880">
    <molecule id="Q8IWQ3-4"/>
</dbReference>
<dbReference type="ProteomicsDB" id="70881">
    <molecule id="Q8IWQ3-5"/>
</dbReference>
<dbReference type="Pumba" id="Q8IWQ3"/>
<dbReference type="Antibodypedia" id="22872">
    <property type="antibodies" value="224 antibodies from 35 providers"/>
</dbReference>
<dbReference type="DNASU" id="9024"/>
<dbReference type="Ensembl" id="ENST00000308219.13">
    <molecule id="Q8IWQ3-3"/>
    <property type="protein sequence ID" value="ENSP00000310697.9"/>
    <property type="gene ID" value="ENSG00000174672.16"/>
</dbReference>
<dbReference type="Ensembl" id="ENST00000382179.5">
    <molecule id="Q8IWQ3-5"/>
    <property type="protein sequence ID" value="ENSP00000371614.1"/>
    <property type="gene ID" value="ENSG00000174672.16"/>
</dbReference>
<dbReference type="Ensembl" id="ENST00000526678.5">
    <molecule id="Q8IWQ3-4"/>
    <property type="protein sequence ID" value="ENSP00000433370.1"/>
    <property type="gene ID" value="ENSG00000174672.16"/>
</dbReference>
<dbReference type="Ensembl" id="ENST00000528710.5">
    <molecule id="Q8IWQ3-6"/>
    <property type="protein sequence ID" value="ENSP00000433235.1"/>
    <property type="gene ID" value="ENSG00000174672.16"/>
</dbReference>
<dbReference type="Ensembl" id="ENST00000528841.6">
    <molecule id="Q8IWQ3-1"/>
    <property type="protein sequence ID" value="ENSP00000432000.1"/>
    <property type="gene ID" value="ENSG00000174672.16"/>
</dbReference>
<dbReference type="Ensembl" id="ENST00000529433.5">
    <molecule id="Q8IWQ3-2"/>
    <property type="protein sequence ID" value="ENSP00000433684.1"/>
    <property type="gene ID" value="ENSG00000174672.16"/>
</dbReference>
<dbReference type="Ensembl" id="ENST00000531197.5">
    <molecule id="Q8IWQ3-2"/>
    <property type="protein sequence ID" value="ENSP00000431152.1"/>
    <property type="gene ID" value="ENSG00000174672.16"/>
</dbReference>
<dbReference type="Ensembl" id="ENST00000707533.1">
    <molecule id="Q8IWQ3-3"/>
    <property type="protein sequence ID" value="ENSP00000516897.1"/>
    <property type="gene ID" value="ENSG00000291428.1"/>
</dbReference>
<dbReference type="Ensembl" id="ENST00000707534.1">
    <molecule id="Q8IWQ3-2"/>
    <property type="protein sequence ID" value="ENSP00000516898.1"/>
    <property type="gene ID" value="ENSG00000291428.1"/>
</dbReference>
<dbReference type="Ensembl" id="ENST00000707535.1">
    <molecule id="Q8IWQ3-1"/>
    <property type="protein sequence ID" value="ENSP00000516899.1"/>
    <property type="gene ID" value="ENSG00000291428.1"/>
</dbReference>
<dbReference type="Ensembl" id="ENST00000707536.1">
    <molecule id="Q8IWQ3-2"/>
    <property type="protein sequence ID" value="ENSP00000516900.1"/>
    <property type="gene ID" value="ENSG00000291428.1"/>
</dbReference>
<dbReference type="Ensembl" id="ENST00000707537.1">
    <molecule id="Q8IWQ3-4"/>
    <property type="protein sequence ID" value="ENSP00000516901.1"/>
    <property type="gene ID" value="ENSG00000291428.1"/>
</dbReference>
<dbReference type="Ensembl" id="ENST00000707540.1">
    <molecule id="Q8IWQ3-6"/>
    <property type="protein sequence ID" value="ENSP00000516904.1"/>
    <property type="gene ID" value="ENSG00000291428.1"/>
</dbReference>
<dbReference type="Ensembl" id="ENST00000707541.1">
    <molecule id="Q8IWQ3-5"/>
    <property type="protein sequence ID" value="ENSP00000516905.1"/>
    <property type="gene ID" value="ENSG00000291428.1"/>
</dbReference>
<dbReference type="GeneID" id="9024"/>
<dbReference type="KEGG" id="hsa:9024"/>
<dbReference type="MANE-Select" id="ENST00000528841.6">
    <property type="protein sequence ID" value="ENSP00000432000.1"/>
    <property type="RefSeq nucleotide sequence ID" value="NM_001256627.2"/>
    <property type="RefSeq protein sequence ID" value="NP_001243556.1"/>
</dbReference>
<dbReference type="UCSC" id="uc001lti.5">
    <molecule id="Q8IWQ3-1"/>
    <property type="organism name" value="human"/>
</dbReference>
<dbReference type="AGR" id="HGNC:11405"/>
<dbReference type="CTD" id="9024"/>
<dbReference type="DisGeNET" id="9024"/>
<dbReference type="GeneCards" id="BRSK2"/>
<dbReference type="HGNC" id="HGNC:11405">
    <property type="gene designation" value="BRSK2"/>
</dbReference>
<dbReference type="HPA" id="ENSG00000174672">
    <property type="expression patterns" value="Group enriched (brain, pancreas)"/>
</dbReference>
<dbReference type="MalaCards" id="BRSK2"/>
<dbReference type="MIM" id="609236">
    <property type="type" value="gene"/>
</dbReference>
<dbReference type="neXtProt" id="NX_Q8IWQ3"/>
<dbReference type="OpenTargets" id="ENSG00000174672"/>
<dbReference type="Orphanet" id="178469">
    <property type="disease" value="Autosomal dominant non-syndromic intellectual disability"/>
</dbReference>
<dbReference type="PharmGKB" id="PA36212"/>
<dbReference type="VEuPathDB" id="HostDB:ENSG00000174672"/>
<dbReference type="eggNOG" id="KOG0588">
    <property type="taxonomic scope" value="Eukaryota"/>
</dbReference>
<dbReference type="GeneTree" id="ENSGT00940000157462"/>
<dbReference type="HOGENOM" id="CLU_000288_156_2_1"/>
<dbReference type="InParanoid" id="Q8IWQ3"/>
<dbReference type="OMA" id="DTHCVPV"/>
<dbReference type="OrthoDB" id="9482878at2759"/>
<dbReference type="PAN-GO" id="Q8IWQ3">
    <property type="GO annotations" value="9 GO annotations based on evolutionary models"/>
</dbReference>
<dbReference type="PhylomeDB" id="Q8IWQ3"/>
<dbReference type="TreeFam" id="TF313967"/>
<dbReference type="PathwayCommons" id="Q8IWQ3"/>
<dbReference type="SignaLink" id="Q8IWQ3"/>
<dbReference type="SIGNOR" id="Q8IWQ3"/>
<dbReference type="BioGRID-ORCS" id="9024">
    <property type="hits" value="9 hits in 1181 CRISPR screens"/>
</dbReference>
<dbReference type="ChiTaRS" id="BRSK2">
    <property type="organism name" value="human"/>
</dbReference>
<dbReference type="GeneWiki" id="BRSK2"/>
<dbReference type="GenomeRNAi" id="9024"/>
<dbReference type="Pharos" id="Q8IWQ3">
    <property type="development level" value="Tchem"/>
</dbReference>
<dbReference type="PRO" id="PR:Q8IWQ3"/>
<dbReference type="Proteomes" id="UP000005640">
    <property type="component" value="Chromosome 11"/>
</dbReference>
<dbReference type="RNAct" id="Q8IWQ3">
    <property type="molecule type" value="protein"/>
</dbReference>
<dbReference type="Bgee" id="ENSG00000174672">
    <property type="expression patterns" value="Expressed in right hemisphere of cerebellum and 108 other cell types or tissues"/>
</dbReference>
<dbReference type="ExpressionAtlas" id="Q8IWQ3">
    <property type="expression patterns" value="baseline and differential"/>
</dbReference>
<dbReference type="GO" id="GO:0005813">
    <property type="term" value="C:centrosome"/>
    <property type="evidence" value="ECO:0000314"/>
    <property type="project" value="UniProtKB"/>
</dbReference>
<dbReference type="GO" id="GO:0005737">
    <property type="term" value="C:cytoplasm"/>
    <property type="evidence" value="ECO:0000314"/>
    <property type="project" value="UniProtKB"/>
</dbReference>
<dbReference type="GO" id="GO:0150034">
    <property type="term" value="C:distal axon"/>
    <property type="evidence" value="ECO:0000250"/>
    <property type="project" value="ARUK-UCL"/>
</dbReference>
<dbReference type="GO" id="GO:0005783">
    <property type="term" value="C:endoplasmic reticulum"/>
    <property type="evidence" value="ECO:0000314"/>
    <property type="project" value="ParkinsonsUK-UCL"/>
</dbReference>
<dbReference type="GO" id="GO:0048471">
    <property type="term" value="C:perinuclear region of cytoplasm"/>
    <property type="evidence" value="ECO:0007669"/>
    <property type="project" value="UniProtKB-SubCell"/>
</dbReference>
<dbReference type="GO" id="GO:0005524">
    <property type="term" value="F:ATP binding"/>
    <property type="evidence" value="ECO:0000314"/>
    <property type="project" value="UniProtKB"/>
</dbReference>
<dbReference type="GO" id="GO:0051117">
    <property type="term" value="F:ATPase binding"/>
    <property type="evidence" value="ECO:0000314"/>
    <property type="project" value="ParkinsonsUK-UCL"/>
</dbReference>
<dbReference type="GO" id="GO:0060590">
    <property type="term" value="F:ATPase regulator activity"/>
    <property type="evidence" value="ECO:0000303"/>
    <property type="project" value="ParkinsonsUK-UCL"/>
</dbReference>
<dbReference type="GO" id="GO:0000287">
    <property type="term" value="F:magnesium ion binding"/>
    <property type="evidence" value="ECO:0000314"/>
    <property type="project" value="UniProtKB"/>
</dbReference>
<dbReference type="GO" id="GO:0019901">
    <property type="term" value="F:protein kinase binding"/>
    <property type="evidence" value="ECO:0007669"/>
    <property type="project" value="Ensembl"/>
</dbReference>
<dbReference type="GO" id="GO:0106310">
    <property type="term" value="F:protein serine kinase activity"/>
    <property type="evidence" value="ECO:0007669"/>
    <property type="project" value="RHEA"/>
</dbReference>
<dbReference type="GO" id="GO:0004674">
    <property type="term" value="F:protein serine/threonine kinase activity"/>
    <property type="evidence" value="ECO:0000314"/>
    <property type="project" value="UniProtKB"/>
</dbReference>
<dbReference type="GO" id="GO:0048156">
    <property type="term" value="F:tau protein binding"/>
    <property type="evidence" value="ECO:0000303"/>
    <property type="project" value="ARUK-UCL"/>
</dbReference>
<dbReference type="GO" id="GO:0050321">
    <property type="term" value="F:tau-protein kinase activity"/>
    <property type="evidence" value="ECO:0000314"/>
    <property type="project" value="UniProtKB"/>
</dbReference>
<dbReference type="GO" id="GO:0030036">
    <property type="term" value="P:actin cytoskeleton organization"/>
    <property type="evidence" value="ECO:0000315"/>
    <property type="project" value="UniProtKB"/>
</dbReference>
<dbReference type="GO" id="GO:0007409">
    <property type="term" value="P:axonogenesis"/>
    <property type="evidence" value="ECO:0000250"/>
    <property type="project" value="UniProtKB"/>
</dbReference>
<dbReference type="GO" id="GO:0051301">
    <property type="term" value="P:cell division"/>
    <property type="evidence" value="ECO:0007669"/>
    <property type="project" value="UniProtKB-KW"/>
</dbReference>
<dbReference type="GO" id="GO:0021953">
    <property type="term" value="P:central nervous system neuron differentiation"/>
    <property type="evidence" value="ECO:0007669"/>
    <property type="project" value="Ensembl"/>
</dbReference>
<dbReference type="GO" id="GO:0036503">
    <property type="term" value="P:ERAD pathway"/>
    <property type="evidence" value="ECO:0000315"/>
    <property type="project" value="ParkinsonsUK-UCL"/>
</dbReference>
<dbReference type="GO" id="GO:0030010">
    <property type="term" value="P:establishment of cell polarity"/>
    <property type="evidence" value="ECO:0000250"/>
    <property type="project" value="UniProtKB"/>
</dbReference>
<dbReference type="GO" id="GO:0006887">
    <property type="term" value="P:exocytosis"/>
    <property type="evidence" value="ECO:0007669"/>
    <property type="project" value="UniProtKB-KW"/>
</dbReference>
<dbReference type="GO" id="GO:0000086">
    <property type="term" value="P:G2/M transition of mitotic cell cycle"/>
    <property type="evidence" value="ECO:0000315"/>
    <property type="project" value="UniProtKB"/>
</dbReference>
<dbReference type="GO" id="GO:0070059">
    <property type="term" value="P:intrinsic apoptotic signaling pathway in response to endoplasmic reticulum stress"/>
    <property type="evidence" value="ECO:0000315"/>
    <property type="project" value="UniProtKB"/>
</dbReference>
<dbReference type="GO" id="GO:0090176">
    <property type="term" value="P:microtubule cytoskeleton organization involved in establishment of planar polarity"/>
    <property type="evidence" value="ECO:0000250"/>
    <property type="project" value="ARUK-UCL"/>
</dbReference>
<dbReference type="GO" id="GO:0030182">
    <property type="term" value="P:neuron differentiation"/>
    <property type="evidence" value="ECO:0000250"/>
    <property type="project" value="UniProtKB"/>
</dbReference>
<dbReference type="GO" id="GO:0006468">
    <property type="term" value="P:protein phosphorylation"/>
    <property type="evidence" value="ECO:0000314"/>
    <property type="project" value="UniProtKB"/>
</dbReference>
<dbReference type="GO" id="GO:0043462">
    <property type="term" value="P:regulation of ATP-dependent activity"/>
    <property type="evidence" value="ECO:0000303"/>
    <property type="project" value="ParkinsonsUK-UCL"/>
</dbReference>
<dbReference type="GO" id="GO:0050770">
    <property type="term" value="P:regulation of axonogenesis"/>
    <property type="evidence" value="ECO:0000250"/>
    <property type="project" value="ARUK-UCL"/>
</dbReference>
<dbReference type="GO" id="GO:0061178">
    <property type="term" value="P:regulation of insulin secretion involved in cellular response to glucose stimulus"/>
    <property type="evidence" value="ECO:0000315"/>
    <property type="project" value="UniProtKB"/>
</dbReference>
<dbReference type="GO" id="GO:0010975">
    <property type="term" value="P:regulation of neuron projection development"/>
    <property type="evidence" value="ECO:0000250"/>
    <property type="project" value="ARUK-UCL"/>
</dbReference>
<dbReference type="GO" id="GO:1904152">
    <property type="term" value="P:regulation of retrograde protein transport, ER to cytosol"/>
    <property type="evidence" value="ECO:0000303"/>
    <property type="project" value="ParkinsonsUK-UCL"/>
</dbReference>
<dbReference type="GO" id="GO:2000807">
    <property type="term" value="P:regulation of synaptic vesicle clustering"/>
    <property type="evidence" value="ECO:0000304"/>
    <property type="project" value="ARUK-UCL"/>
</dbReference>
<dbReference type="CDD" id="cd14081">
    <property type="entry name" value="STKc_BRSK1_2"/>
    <property type="match status" value="1"/>
</dbReference>
<dbReference type="CDD" id="cd14340">
    <property type="entry name" value="UBA_BRSK"/>
    <property type="match status" value="1"/>
</dbReference>
<dbReference type="FunFam" id="1.10.510.10:FF:000064">
    <property type="entry name" value="BR serine/threonine-protein kinase 2"/>
    <property type="match status" value="1"/>
</dbReference>
<dbReference type="FunFam" id="3.30.200.20:FF:000003">
    <property type="entry name" value="Non-specific serine/threonine protein kinase"/>
    <property type="match status" value="1"/>
</dbReference>
<dbReference type="Gene3D" id="1.10.510.10">
    <property type="entry name" value="Transferase(Phosphotransferase) domain 1"/>
    <property type="match status" value="1"/>
</dbReference>
<dbReference type="InterPro" id="IPR048622">
    <property type="entry name" value="BRSK1_2-like_UBA"/>
</dbReference>
<dbReference type="InterPro" id="IPR011009">
    <property type="entry name" value="Kinase-like_dom_sf"/>
</dbReference>
<dbReference type="InterPro" id="IPR000719">
    <property type="entry name" value="Prot_kinase_dom"/>
</dbReference>
<dbReference type="InterPro" id="IPR017441">
    <property type="entry name" value="Protein_kinase_ATP_BS"/>
</dbReference>
<dbReference type="InterPro" id="IPR008271">
    <property type="entry name" value="Ser/Thr_kinase_AS"/>
</dbReference>
<dbReference type="PANTHER" id="PTHR24346:SF108">
    <property type="entry name" value="BR SERINE_THREONINE KINASE 1"/>
    <property type="match status" value="1"/>
</dbReference>
<dbReference type="PANTHER" id="PTHR24346">
    <property type="entry name" value="MAP/MICROTUBULE AFFINITY-REGULATING KINASE"/>
    <property type="match status" value="1"/>
</dbReference>
<dbReference type="Pfam" id="PF21122">
    <property type="entry name" value="KA1_BRSK"/>
    <property type="match status" value="1"/>
</dbReference>
<dbReference type="Pfam" id="PF00069">
    <property type="entry name" value="Pkinase"/>
    <property type="match status" value="1"/>
</dbReference>
<dbReference type="Pfam" id="PF21115">
    <property type="entry name" value="UBA_BRSK"/>
    <property type="match status" value="1"/>
</dbReference>
<dbReference type="SMART" id="SM00220">
    <property type="entry name" value="S_TKc"/>
    <property type="match status" value="1"/>
</dbReference>
<dbReference type="SUPFAM" id="SSF56112">
    <property type="entry name" value="Protein kinase-like (PK-like)"/>
    <property type="match status" value="1"/>
</dbReference>
<dbReference type="PROSITE" id="PS00107">
    <property type="entry name" value="PROTEIN_KINASE_ATP"/>
    <property type="match status" value="1"/>
</dbReference>
<dbReference type="PROSITE" id="PS50011">
    <property type="entry name" value="PROTEIN_KINASE_DOM"/>
    <property type="match status" value="1"/>
</dbReference>
<dbReference type="PROSITE" id="PS00108">
    <property type="entry name" value="PROTEIN_KINASE_ST"/>
    <property type="match status" value="1"/>
</dbReference>
<keyword id="KW-0025">Alternative splicing</keyword>
<keyword id="KW-0053">Apoptosis</keyword>
<keyword id="KW-0067">ATP-binding</keyword>
<keyword id="KW-0131">Cell cycle</keyword>
<keyword id="KW-0132">Cell division</keyword>
<keyword id="KW-0963">Cytoplasm</keyword>
<keyword id="KW-0206">Cytoskeleton</keyword>
<keyword id="KW-0256">Endoplasmic reticulum</keyword>
<keyword id="KW-0268">Exocytosis</keyword>
<keyword id="KW-0418">Kinase</keyword>
<keyword id="KW-0460">Magnesium</keyword>
<keyword id="KW-0479">Metal-binding</keyword>
<keyword id="KW-0498">Mitosis</keyword>
<keyword id="KW-0524">Neurogenesis</keyword>
<keyword id="KW-0547">Nucleotide-binding</keyword>
<keyword id="KW-0597">Phosphoprotein</keyword>
<keyword id="KW-1267">Proteomics identification</keyword>
<keyword id="KW-1185">Reference proteome</keyword>
<keyword id="KW-0723">Serine/threonine-protein kinase</keyword>
<keyword id="KW-0808">Transferase</keyword>
<keyword id="KW-0832">Ubl conjugation</keyword>
<sequence>MTSTGKDGGAQHAQYVGPYRLEKTLGKGQTGLVKLGVHCVTCQKVAIKIVNREKLSESVLMKVEREIAILKLIEHPHVLKLHDVYENKKYLYLVLEHVSGGELFDYLVKKGRLTPKEARKFFRQIISALDFCHSHSICHRDLKPENLLLDEKNNIRIADFGMASLQVGDSLLETSCGSPHYACPEVIRGEKYDGRKADVWSCGVILFALLVGALPFDDDNLRQLLEKVKRGVFHMPHFIPPDCQSLLRGMIEVDAARRLTLEHIQKHIWYIGGKNEPEPEQPIPRKVQIRSLPSLEDIDPDVLDSMHSLGCFRDRNKLLQDLLSEEENQEKMIYFLLLDRKERYPSQEDEDLPPRNEIDPPRKRVDSPMLNRHGKRRPERKSMEVLSVTDGGSPVPARRAIEMAQHGQRSRSISGASSGLSTSPLSSPRVTPHPSPRGSPLPTPKGTPVHTPKESPAGTPNPTPPSSPSVGGVPWRARLNSIKNSFLGSPRFHRRKLQVPTPEEMSNLTPESSPELAKKSWFGNFISLEKEEQIFVVIKDKPLSSIKADIVHAFLSIPSLSHSVISQTSFRAEYKATGGPAVFQKPVKFQVDITYTEGGEAQKENGIYSVTFTLLSGPSRRFKRVVETIQAQLLSTHDPPAAQHLSDTTNCMEMMTGRLSKCGSPLSNFFDVIKQLFSDEKNGQAAQAPSTPAKRSAHGPLGDSAAAGPGPGGDAEYPTGKDTAKMGPPTARREQP</sequence>
<organism>
    <name type="scientific">Homo sapiens</name>
    <name type="common">Human</name>
    <dbReference type="NCBI Taxonomy" id="9606"/>
    <lineage>
        <taxon>Eukaryota</taxon>
        <taxon>Metazoa</taxon>
        <taxon>Chordata</taxon>
        <taxon>Craniata</taxon>
        <taxon>Vertebrata</taxon>
        <taxon>Euteleostomi</taxon>
        <taxon>Mammalia</taxon>
        <taxon>Eutheria</taxon>
        <taxon>Euarchontoglires</taxon>
        <taxon>Primates</taxon>
        <taxon>Haplorrhini</taxon>
        <taxon>Catarrhini</taxon>
        <taxon>Hominidae</taxon>
        <taxon>Homo</taxon>
    </lineage>
</organism>
<reference key="1">
    <citation type="journal article" date="2006" name="Neuron">
        <title>SAD: a presynaptic kinase associated with synaptic vesicles and the active zone cytomatrix that regulates neurotransmitter release.</title>
        <authorList>
            <person name="Inoue E."/>
            <person name="Mochida S."/>
            <person name="Takagi H."/>
            <person name="Higa S."/>
            <person name="Deguchi-Tawarada M."/>
            <person name="Takao-Rikitsu E."/>
            <person name="Inoue M."/>
            <person name="Yao I."/>
            <person name="Takeuchi K."/>
            <person name="Kitajima I."/>
            <person name="Setou M."/>
            <person name="Ohtsuka T."/>
            <person name="Takai Y."/>
        </authorList>
    </citation>
    <scope>NUCLEOTIDE SEQUENCE [MRNA] (ISOFORM 4)</scope>
</reference>
<reference key="2">
    <citation type="submission" date="2002-08" db="EMBL/GenBank/DDBJ databases">
        <authorList>
            <person name="Guo J.H."/>
            <person name="Yu L."/>
        </authorList>
    </citation>
    <scope>NUCLEOTIDE SEQUENCE [LARGE SCALE MRNA] (ISOFORMS 1; 2 AND 3)</scope>
    <source>
        <tissue>Brain</tissue>
    </source>
</reference>
<reference key="3">
    <citation type="journal article" date="2004" name="Nat. Genet.">
        <title>Complete sequencing and characterization of 21,243 full-length human cDNAs.</title>
        <authorList>
            <person name="Ota T."/>
            <person name="Suzuki Y."/>
            <person name="Nishikawa T."/>
            <person name="Otsuki T."/>
            <person name="Sugiyama T."/>
            <person name="Irie R."/>
            <person name="Wakamatsu A."/>
            <person name="Hayashi K."/>
            <person name="Sato H."/>
            <person name="Nagai K."/>
            <person name="Kimura K."/>
            <person name="Makita H."/>
            <person name="Sekine M."/>
            <person name="Obayashi M."/>
            <person name="Nishi T."/>
            <person name="Shibahara T."/>
            <person name="Tanaka T."/>
            <person name="Ishii S."/>
            <person name="Yamamoto J."/>
            <person name="Saito K."/>
            <person name="Kawai Y."/>
            <person name="Isono Y."/>
            <person name="Nakamura Y."/>
            <person name="Nagahari K."/>
            <person name="Murakami K."/>
            <person name="Yasuda T."/>
            <person name="Iwayanagi T."/>
            <person name="Wagatsuma M."/>
            <person name="Shiratori A."/>
            <person name="Sudo H."/>
            <person name="Hosoiri T."/>
            <person name="Kaku Y."/>
            <person name="Kodaira H."/>
            <person name="Kondo H."/>
            <person name="Sugawara M."/>
            <person name="Takahashi M."/>
            <person name="Kanda K."/>
            <person name="Yokoi T."/>
            <person name="Furuya T."/>
            <person name="Kikkawa E."/>
            <person name="Omura Y."/>
            <person name="Abe K."/>
            <person name="Kamihara K."/>
            <person name="Katsuta N."/>
            <person name="Sato K."/>
            <person name="Tanikawa M."/>
            <person name="Yamazaki M."/>
            <person name="Ninomiya K."/>
            <person name="Ishibashi T."/>
            <person name="Yamashita H."/>
            <person name="Murakawa K."/>
            <person name="Fujimori K."/>
            <person name="Tanai H."/>
            <person name="Kimata M."/>
            <person name="Watanabe M."/>
            <person name="Hiraoka S."/>
            <person name="Chiba Y."/>
            <person name="Ishida S."/>
            <person name="Ono Y."/>
            <person name="Takiguchi S."/>
            <person name="Watanabe S."/>
            <person name="Yosida M."/>
            <person name="Hotuta T."/>
            <person name="Kusano J."/>
            <person name="Kanehori K."/>
            <person name="Takahashi-Fujii A."/>
            <person name="Hara H."/>
            <person name="Tanase T.-O."/>
            <person name="Nomura Y."/>
            <person name="Togiya S."/>
            <person name="Komai F."/>
            <person name="Hara R."/>
            <person name="Takeuchi K."/>
            <person name="Arita M."/>
            <person name="Imose N."/>
            <person name="Musashino K."/>
            <person name="Yuuki H."/>
            <person name="Oshima A."/>
            <person name="Sasaki N."/>
            <person name="Aotsuka S."/>
            <person name="Yoshikawa Y."/>
            <person name="Matsunawa H."/>
            <person name="Ichihara T."/>
            <person name="Shiohata N."/>
            <person name="Sano S."/>
            <person name="Moriya S."/>
            <person name="Momiyama H."/>
            <person name="Satoh N."/>
            <person name="Takami S."/>
            <person name="Terashima Y."/>
            <person name="Suzuki O."/>
            <person name="Nakagawa S."/>
            <person name="Senoh A."/>
            <person name="Mizoguchi H."/>
            <person name="Goto Y."/>
            <person name="Shimizu F."/>
            <person name="Wakebe H."/>
            <person name="Hishigaki H."/>
            <person name="Watanabe T."/>
            <person name="Sugiyama A."/>
            <person name="Takemoto M."/>
            <person name="Kawakami B."/>
            <person name="Yamazaki M."/>
            <person name="Watanabe K."/>
            <person name="Kumagai A."/>
            <person name="Itakura S."/>
            <person name="Fukuzumi Y."/>
            <person name="Fujimori Y."/>
            <person name="Komiyama M."/>
            <person name="Tashiro H."/>
            <person name="Tanigami A."/>
            <person name="Fujiwara T."/>
            <person name="Ono T."/>
            <person name="Yamada K."/>
            <person name="Fujii Y."/>
            <person name="Ozaki K."/>
            <person name="Hirao M."/>
            <person name="Ohmori Y."/>
            <person name="Kawabata A."/>
            <person name="Hikiji T."/>
            <person name="Kobatake N."/>
            <person name="Inagaki H."/>
            <person name="Ikema Y."/>
            <person name="Okamoto S."/>
            <person name="Okitani R."/>
            <person name="Kawakami T."/>
            <person name="Noguchi S."/>
            <person name="Itoh T."/>
            <person name="Shigeta K."/>
            <person name="Senba T."/>
            <person name="Matsumura K."/>
            <person name="Nakajima Y."/>
            <person name="Mizuno T."/>
            <person name="Morinaga M."/>
            <person name="Sasaki M."/>
            <person name="Togashi T."/>
            <person name="Oyama M."/>
            <person name="Hata H."/>
            <person name="Watanabe M."/>
            <person name="Komatsu T."/>
            <person name="Mizushima-Sugano J."/>
            <person name="Satoh T."/>
            <person name="Shirai Y."/>
            <person name="Takahashi Y."/>
            <person name="Nakagawa K."/>
            <person name="Okumura K."/>
            <person name="Nagase T."/>
            <person name="Nomura N."/>
            <person name="Kikuchi H."/>
            <person name="Masuho Y."/>
            <person name="Yamashita R."/>
            <person name="Nakai K."/>
            <person name="Yada T."/>
            <person name="Nakamura Y."/>
            <person name="Ohara O."/>
            <person name="Isogai T."/>
            <person name="Sugano S."/>
        </authorList>
    </citation>
    <scope>NUCLEOTIDE SEQUENCE [LARGE SCALE MRNA] (ISOFORS 5 AND 6)</scope>
    <source>
        <tissue>Amygdala</tissue>
    </source>
</reference>
<reference key="4">
    <citation type="journal article" date="2006" name="Nature">
        <title>Human chromosome 11 DNA sequence and analysis including novel gene identification.</title>
        <authorList>
            <person name="Taylor T.D."/>
            <person name="Noguchi H."/>
            <person name="Totoki Y."/>
            <person name="Toyoda A."/>
            <person name="Kuroki Y."/>
            <person name="Dewar K."/>
            <person name="Lloyd C."/>
            <person name="Itoh T."/>
            <person name="Takeda T."/>
            <person name="Kim D.-W."/>
            <person name="She X."/>
            <person name="Barlow K.F."/>
            <person name="Bloom T."/>
            <person name="Bruford E."/>
            <person name="Chang J.L."/>
            <person name="Cuomo C.A."/>
            <person name="Eichler E."/>
            <person name="FitzGerald M.G."/>
            <person name="Jaffe D.B."/>
            <person name="LaButti K."/>
            <person name="Nicol R."/>
            <person name="Park H.-S."/>
            <person name="Seaman C."/>
            <person name="Sougnez C."/>
            <person name="Yang X."/>
            <person name="Zimmer A.R."/>
            <person name="Zody M.C."/>
            <person name="Birren B.W."/>
            <person name="Nusbaum C."/>
            <person name="Fujiyama A."/>
            <person name="Hattori M."/>
            <person name="Rogers J."/>
            <person name="Lander E.S."/>
            <person name="Sakaki Y."/>
        </authorList>
    </citation>
    <scope>NUCLEOTIDE SEQUENCE [LARGE SCALE GENOMIC DNA]</scope>
</reference>
<reference key="5">
    <citation type="journal article" date="2001" name="Yeast">
        <title>Characterization of 16 novel human genes showing high similarity to yeast sequences.</title>
        <authorList>
            <person name="Stanchi F."/>
            <person name="Bertocco E."/>
            <person name="Toppo S."/>
            <person name="Dioguardi R."/>
            <person name="Simionati B."/>
            <person name="Cannata N."/>
            <person name="Zimbello R."/>
            <person name="Lanfranchi G."/>
            <person name="Valle G."/>
        </authorList>
    </citation>
    <scope>NUCLEOTIDE SEQUENCE [MRNA] OF 72-736 (ISOFORM 2)</scope>
    <source>
        <tissue>Brain</tissue>
    </source>
</reference>
<reference key="6">
    <citation type="journal article" date="2004" name="Genome Res.">
        <title>The status, quality, and expansion of the NIH full-length cDNA project: the Mammalian Gene Collection (MGC).</title>
        <authorList>
            <consortium name="The MGC Project Team"/>
        </authorList>
    </citation>
    <scope>NUCLEOTIDE SEQUENCE [LARGE SCALE MRNA] OF 454-736 (ISOFORM 2)</scope>
    <source>
        <tissue>Eye</tissue>
    </source>
</reference>
<reference key="7">
    <citation type="journal article" date="1999" name="J. Hum. Genet.">
        <title>Repeat-directed isolation of a novel gene preferentially expressed from the maternal allele in human placenta.</title>
        <authorList>
            <person name="Miura K."/>
            <person name="Miyoshi O."/>
            <person name="Yun K."/>
            <person name="Inazawa J."/>
            <person name="Miyamoto T."/>
            <person name="Hayashi H."/>
            <person name="Masuzaki H."/>
            <person name="Yoshimura S."/>
            <person name="Niikawa N."/>
            <person name="Jinno Y."/>
            <person name="Ishimaru T."/>
        </authorList>
    </citation>
    <scope>NUCLEOTIDE SEQUENCE [MRNA] OF 463-736 (ISOFORM 3)</scope>
</reference>
<reference key="8">
    <citation type="journal article" date="2004" name="EMBO J.">
        <title>LKB1 is a master kinase that activates 13 kinases of the AMPK subfamily, including MARK/PAR-1.</title>
        <authorList>
            <person name="Lizcano J.M."/>
            <person name="Goeransson O."/>
            <person name="Toth R."/>
            <person name="Deak M."/>
            <person name="Morrice N.A."/>
            <person name="Boudeau J."/>
            <person name="Hawley S.A."/>
            <person name="Udd L."/>
            <person name="Maekelae T.P."/>
            <person name="Hardie D.G."/>
            <person name="Alessi D.R."/>
        </authorList>
    </citation>
    <scope>FUNCTION</scope>
    <scope>ACTIVITY REGULATION</scope>
    <scope>PHOSPHORYLATION AT THR-174</scope>
    <scope>MUTAGENESIS OF THR-174</scope>
</reference>
<reference key="9">
    <citation type="journal article" date="2006" name="Biochem. Biophys. Res. Commun.">
        <title>BRSK2 is activated by cyclic AMP-dependent protein kinase A through phosphorylation at Thr260.</title>
        <authorList>
            <person name="Guo Z."/>
            <person name="Tang W."/>
            <person name="Yuan J."/>
            <person name="Chen X."/>
            <person name="Wan B."/>
            <person name="Gu X."/>
            <person name="Luo K."/>
            <person name="Wang Y."/>
            <person name="Yu L."/>
        </authorList>
    </citation>
    <scope>PHOSPHORYLATION AT THR-260</scope>
    <scope>MUTAGENESIS OF THR-260</scope>
</reference>
<reference key="10">
    <citation type="journal article" date="2008" name="J. Biol. Chem.">
        <title>Investigating the regulation of brain-specific kinases 1 and 2 by phosphorylation.</title>
        <authorList>
            <person name="Bright N.J."/>
            <person name="Carling D."/>
            <person name="Thornton C."/>
        </authorList>
    </citation>
    <scope>PHOSPHORYLATION AT THR-174</scope>
    <scope>MUTAGENESIS OF THR-174 AND GLY-310</scope>
</reference>
<reference key="11">
    <citation type="journal article" date="2009" name="Anal. Chem.">
        <title>Lys-N and trypsin cover complementary parts of the phosphoproteome in a refined SCX-based approach.</title>
        <authorList>
            <person name="Gauci S."/>
            <person name="Helbig A.O."/>
            <person name="Slijper M."/>
            <person name="Krijgsveld J."/>
            <person name="Heck A.J."/>
            <person name="Mohammed S."/>
        </authorList>
    </citation>
    <scope>IDENTIFICATION BY MASS SPECTROMETRY [LARGE SCALE ANALYSIS]</scope>
</reference>
<reference key="12">
    <citation type="journal article" date="2009" name="Mol. Cell. Proteomics">
        <title>Large-scale proteomics analysis of the human kinome.</title>
        <authorList>
            <person name="Oppermann F.S."/>
            <person name="Gnad F."/>
            <person name="Olsen J.V."/>
            <person name="Hornberger R."/>
            <person name="Greff Z."/>
            <person name="Keri G."/>
            <person name="Mann M."/>
            <person name="Daub H."/>
        </authorList>
    </citation>
    <scope>PHOSPHORYLATION [LARGE SCALE ANALYSIS] AT SER-367; SER-382 AND SER-393</scope>
    <scope>PHOSPHORYLATION [LARGE SCALE ANALYSIS] AT SER-416 (ISOFORM 4)</scope>
    <scope>IDENTIFICATION BY MASS SPECTROMETRY [LARGE SCALE ANALYSIS]</scope>
</reference>
<reference key="13">
    <citation type="journal article" date="2009" name="Sci. Signal.">
        <title>Quantitative phosphoproteomic analysis of T cell receptor signaling reveals system-wide modulation of protein-protein interactions.</title>
        <authorList>
            <person name="Mayya V."/>
            <person name="Lundgren D.H."/>
            <person name="Hwang S.-I."/>
            <person name="Rezaul K."/>
            <person name="Wu L."/>
            <person name="Eng J.K."/>
            <person name="Rodionov V."/>
            <person name="Han D.K."/>
        </authorList>
    </citation>
    <scope>PHOSPHORYLATION [LARGE SCALE ANALYSIS] AT SER-382; SER-393; SER-412 AND THR-509</scope>
    <scope>IDENTIFICATION BY MASS SPECTROMETRY [LARGE SCALE ANALYSIS]</scope>
    <source>
        <tissue>Leukemic T-cell</tissue>
    </source>
</reference>
<reference key="14">
    <citation type="journal article" date="2010" name="Biochem. J.">
        <title>Calmodulin-dependent protein kinase kinase-beta activates AMPK without forming a stable complex: synergistic effects of Ca2+ and AMP.</title>
        <authorList>
            <person name="Fogarty S."/>
            <person name="Hawley S.A."/>
            <person name="Green K.A."/>
            <person name="Saner N."/>
            <person name="Mustard K.J."/>
            <person name="Hardie D.G."/>
        </authorList>
    </citation>
    <scope>PHOSPHORYLATION</scope>
</reference>
<reference key="15">
    <citation type="journal article" date="2010" name="J. Cell Sci.">
        <title>Persistence of the cell-cycle checkpoint kinase Wee1 in SadA- and SadB-deficient neurons disrupts neuronal polarity.</title>
        <authorList>
            <person name="Muller M."/>
            <person name="Lutter D."/>
            <person name="Puschel A.W."/>
        </authorList>
    </citation>
    <scope>FUNCTION</scope>
</reference>
<reference key="16">
    <citation type="journal article" date="2012" name="Biochem. Biophys. Res. Commun.">
        <title>Jab1 interacts with brain-specific kinase 2 (BRSK2) and promotes its degradation in the ubiquitin-proteasome pathway.</title>
        <authorList>
            <person name="Zhou J."/>
            <person name="Wan B."/>
            <person name="Li R."/>
            <person name="Gu X."/>
            <person name="Zhong Z."/>
            <person name="Wang Y."/>
            <person name="Yu L."/>
        </authorList>
    </citation>
    <scope>INTERACTION WITH COPS5</scope>
    <scope>SUBCELLULAR LOCATION</scope>
    <scope>UBIQUITINATION</scope>
</reference>
<reference key="17">
    <citation type="journal article" date="2012" name="Biochem. Biophys. Res. Commun.">
        <title>BRSK2 is regulated by ER stress in protein level and involved in ER stress-induced apoptosis.</title>
        <authorList>
            <person name="Wang Y."/>
            <person name="Wan B."/>
            <person name="Li D."/>
            <person name="Zhou J."/>
            <person name="Li R."/>
            <person name="Bai M."/>
            <person name="Chen F."/>
            <person name="Yu L."/>
        </authorList>
    </citation>
    <scope>SUBCELLULAR LOCATION</scope>
</reference>
<reference key="18">
    <citation type="journal article" date="2012" name="J. Biol. Chem.">
        <title>Synapses of amphids defective (SAD-A) kinase promotes glucose-stimulated insulin secretion through activation of p21-activated kinase (PAK1) in pancreatic beta-Cells.</title>
        <authorList>
            <person name="Nie J."/>
            <person name="Sun C."/>
            <person name="Faruque O."/>
            <person name="Ye G."/>
            <person name="Li J."/>
            <person name="Liang Q."/>
            <person name="Chang Z."/>
            <person name="Yang W."/>
            <person name="Han X."/>
            <person name="Shi Y."/>
        </authorList>
    </citation>
    <scope>FUNCTION</scope>
    <scope>INTERACTION WITH PAK1</scope>
    <scope>MUTAGENESIS OF LYS-48; THR-260 AND THR-443</scope>
</reference>
<reference key="19">
    <citation type="journal article" date="2012" name="J. Biol. Chem.">
        <title>Brain-selective kinase 2 (BRSK2) phosphorylation on PCTAIRE1 negatively regulates glucose-stimulated insulin secretion in pancreatic beta-cells.</title>
        <authorList>
            <person name="Chen X.Y."/>
            <person name="Gu X.T."/>
            <person name="Saiyin H."/>
            <person name="Wan B."/>
            <person name="Zhang Y.J."/>
            <person name="Li J."/>
            <person name="Wang Y.L."/>
            <person name="Gao R."/>
            <person name="Wang Y.F."/>
            <person name="Dong W.P."/>
            <person name="Najjar S.M."/>
            <person name="Zhang C.Y."/>
            <person name="Ding H.F."/>
            <person name="Liu J.O."/>
            <person name="Yu L."/>
        </authorList>
    </citation>
    <scope>FUNCTION</scope>
    <scope>CATALYTIC ACTIVITY</scope>
    <scope>TISSUE SPECIFICITY</scope>
    <scope>MUTAGENESIS OF LYS-48 AND THR-174</scope>
</reference>
<reference key="20">
    <citation type="journal article" date="2012" name="J. Neurochem.">
        <title>Phosphorylation of microtubule-associated protein tau by AMPK-related kinases.</title>
        <authorList>
            <person name="Yoshida H."/>
            <person name="Goedert M."/>
        </authorList>
    </citation>
    <scope>CATALYTIC ACTIVITY</scope>
    <scope>FUNCTION IN MAPT PHOSPHORYLATION</scope>
</reference>
<reference key="21">
    <citation type="journal article" date="2012" name="PLoS ONE">
        <title>APC/C(Cdh1) targets brain-specific kinase 2 (BRSK2) for degradation via the ubiquitin-proteasome pathway.</title>
        <authorList>
            <person name="Li R."/>
            <person name="Wan B."/>
            <person name="Zhou J."/>
            <person name="Wang Y."/>
            <person name="Luo T."/>
            <person name="Gu X."/>
            <person name="Chen F."/>
            <person name="Yu L."/>
        </authorList>
    </citation>
    <scope>FUNCTION</scope>
    <scope>SUBCELLULAR LOCATION</scope>
    <scope>UBIQUITINATION</scope>
    <scope>INTERACTION WITH FZR1</scope>
    <scope>DOMAIN KEN BOX MOTIF</scope>
</reference>
<proteinExistence type="evidence at protein level"/>
<comment type="function">
    <text evidence="7 11 12 14 15 16">Serine/threonine-protein kinase that plays a key role in polarization of neurons and axonogenesis, cell cycle progress and insulin secretion. Phosphorylates CDK16, CDC25C, MAPT/TAU, PAK1 and WEE1. Following phosphorylation and activation by STK11/LKB1, acts as a key regulator of polarization of cortical neurons, probably by mediating phosphorylation of microtubule-associated proteins such as MAPT/TAU at 'Thr-529' and 'Ser-579'. Also regulates neuron polarization by mediating phosphorylation of WEE1 at 'Ser-642' in postmitotic neurons, leading to down-regulate WEE1 activity in polarized neurons. Plays a role in the regulation of the mitotic cell cycle progress and the onset of mitosis. Plays a role in the regulation of insulin secretion in response to elevated glucose levels, probably via phosphorylation of CDK16 and PAK1. While BRSK2 phosphorylated at Thr-174 can inhibit insulin secretion (PubMed:22798068), BRSK2 phosphorylated at Thr-260 can promote insulin secretion (PubMed:22669945). Regulates reorganization of the actin cytoskeleton. May play a role in the apoptotic response triggered by endoplasmic reticulum (ER) stress.</text>
</comment>
<comment type="catalytic activity">
    <reaction>
        <text>L-seryl-[protein] + ATP = O-phospho-L-seryl-[protein] + ADP + H(+)</text>
        <dbReference type="Rhea" id="RHEA:17989"/>
        <dbReference type="Rhea" id="RHEA-COMP:9863"/>
        <dbReference type="Rhea" id="RHEA-COMP:11604"/>
        <dbReference type="ChEBI" id="CHEBI:15378"/>
        <dbReference type="ChEBI" id="CHEBI:29999"/>
        <dbReference type="ChEBI" id="CHEBI:30616"/>
        <dbReference type="ChEBI" id="CHEBI:83421"/>
        <dbReference type="ChEBI" id="CHEBI:456216"/>
        <dbReference type="EC" id="2.7.11.1"/>
    </reaction>
</comment>
<comment type="catalytic activity">
    <reaction>
        <text>L-threonyl-[protein] + ATP = O-phospho-L-threonyl-[protein] + ADP + H(+)</text>
        <dbReference type="Rhea" id="RHEA:46608"/>
        <dbReference type="Rhea" id="RHEA-COMP:11060"/>
        <dbReference type="Rhea" id="RHEA-COMP:11605"/>
        <dbReference type="ChEBI" id="CHEBI:15378"/>
        <dbReference type="ChEBI" id="CHEBI:30013"/>
        <dbReference type="ChEBI" id="CHEBI:30616"/>
        <dbReference type="ChEBI" id="CHEBI:61977"/>
        <dbReference type="ChEBI" id="CHEBI:456216"/>
        <dbReference type="EC" id="2.7.11.1"/>
    </reaction>
</comment>
<comment type="catalytic activity">
    <reaction>
        <text>L-seryl-[tau protein] + ATP = O-phospho-L-seryl-[tau protein] + ADP + H(+)</text>
        <dbReference type="Rhea" id="RHEA:12801"/>
        <dbReference type="Rhea" id="RHEA-COMP:13701"/>
        <dbReference type="Rhea" id="RHEA-COMP:13702"/>
        <dbReference type="ChEBI" id="CHEBI:15378"/>
        <dbReference type="ChEBI" id="CHEBI:29999"/>
        <dbReference type="ChEBI" id="CHEBI:30616"/>
        <dbReference type="ChEBI" id="CHEBI:83421"/>
        <dbReference type="ChEBI" id="CHEBI:456216"/>
        <dbReference type="EC" id="2.7.11.26"/>
    </reaction>
</comment>
<comment type="catalytic activity">
    <reaction>
        <text>L-threonyl-[tau protein] + ATP = O-phospho-L-threonyl-[tau protein] + ADP + H(+)</text>
        <dbReference type="Rhea" id="RHEA:53904"/>
        <dbReference type="Rhea" id="RHEA-COMP:13703"/>
        <dbReference type="Rhea" id="RHEA-COMP:13704"/>
        <dbReference type="ChEBI" id="CHEBI:15378"/>
        <dbReference type="ChEBI" id="CHEBI:30013"/>
        <dbReference type="ChEBI" id="CHEBI:30616"/>
        <dbReference type="ChEBI" id="CHEBI:61977"/>
        <dbReference type="ChEBI" id="CHEBI:456216"/>
        <dbReference type="EC" id="2.7.11.26"/>
    </reaction>
</comment>
<comment type="cofactor">
    <cofactor evidence="1">
        <name>Mg(2+)</name>
        <dbReference type="ChEBI" id="CHEBI:18420"/>
    </cofactor>
</comment>
<comment type="activity regulation">
    <text evidence="7">Activated by phosphorylation on Thr-174 by STK11/LKB1.</text>
</comment>
<comment type="subunit">
    <text evidence="13 14 16">Interacts with FZR1, a regulatory subunit of the APC ubiquitin ligase complex. Interacts with COPS5. Interacts with PAK1.</text>
</comment>
<comment type="interaction">
    <interactant intactId="EBI-3232062">
        <id>Q8IWQ3</id>
    </interactant>
    <interactant intactId="EBI-594661">
        <id>Q92905</id>
        <label>COPS5</label>
    </interactant>
    <organismsDiffer>false</organismsDiffer>
    <experiments>6</experiments>
</comment>
<comment type="interaction">
    <interactant intactId="EBI-3232062">
        <id>Q8IWQ3</id>
    </interactant>
    <interactant intactId="EBI-356498">
        <id>P62258</id>
        <label>YWHAE</label>
    </interactant>
    <organismsDiffer>false</organismsDiffer>
    <experiments>2</experiments>
</comment>
<comment type="interaction">
    <interactant intactId="EBI-13085322">
        <id>Q8IWQ3-3</id>
    </interactant>
    <interactant intactId="EBI-359276">
        <id>Q9Y4K3</id>
        <label>TRAF6</label>
    </interactant>
    <organismsDiffer>false</organismsDiffer>
    <experiments>3</experiments>
</comment>
<comment type="subcellular location">
    <subcellularLocation>
        <location>Cytoplasm</location>
        <location>Cytoskeleton</location>
        <location>Microtubule organizing center</location>
        <location>Centrosome</location>
    </subcellularLocation>
    <subcellularLocation>
        <location>Cytoplasm</location>
        <location>Perinuclear region</location>
    </subcellularLocation>
    <subcellularLocation>
        <location>Endoplasmic reticulum</location>
    </subcellularLocation>
    <text>Detected at centrosomes during mitosis. Localizes to the endoplasmic reticulum in response to stress caused by tunicamycin.</text>
</comment>
<comment type="alternative products">
    <event type="alternative splicing"/>
    <isoform>
        <id>Q8IWQ3-1</id>
        <name>1</name>
        <sequence type="displayed"/>
    </isoform>
    <isoform>
        <id>Q8IWQ3-2</id>
        <name>2</name>
        <sequence type="described" ref="VSP_008154 VSP_008155"/>
    </isoform>
    <isoform>
        <id>Q8IWQ3-3</id>
        <name>3</name>
        <sequence type="described" ref="VSP_008156 VSP_008157"/>
    </isoform>
    <isoform>
        <id>Q8IWQ3-4</id>
        <name>4</name>
        <sequence type="described" ref="VSP_013945 VSP_008154 VSP_008155"/>
    </isoform>
    <isoform>
        <id>Q8IWQ3-5</id>
        <name>5</name>
        <sequence type="described" ref="VSP_022603 VSP_022604"/>
    </isoform>
    <isoform>
        <id>Q8IWQ3-6</id>
        <name>6</name>
        <sequence type="described" ref="VSP_055679 VSP_008154 VSP_008155"/>
    </isoform>
</comment>
<comment type="tissue specificity">
    <text evidence="15">Detected in pancreas islets (at protein level).</text>
</comment>
<comment type="domain">
    <text evidence="16">The KEN box motif is required for interaction with FZR1/CDH1 and essential for APC(CDH1)-mediated ubiquitination.</text>
</comment>
<comment type="PTM">
    <text evidence="7 8 9 10 14">Phosphorylated at Thr-174 by STK11/LKB1 in complex with STE20-related adapter-alpha (STRADA) pseudo kinase and CAB39. Not phosphorylated at Thr-174 by CaMKK2. In contrast, it is phosphorylated and activated by CaMKK1. May be inactivated via dephosphorylation of Thr-174 by PP2C. Phosphorylated at Thr-260 by PKA. Phosphorylation at Thr-260 by PKA was not observed in another study (PubMed:18339622), but this may reflect differences in the experimental approach. Phosphorylation at Thr-260 seems to play a role in the regulation of insulin secretion (PubMed:22669945).</text>
</comment>
<comment type="PTM">
    <text evidence="13 16">Polyubiquitinated by the APC complex in conjunction with FZR1, leading to its proteasomal degradation. Targeted for proteasomal degradation by interaction with COPS5. BRSK2 levels change during the cell cycle. BRSK2 levels are low at the G1/S boundary and gradually increase as cells progress into G2 phase. BRSK2 levels decrease rapidly at the end of mitosis.</text>
</comment>
<comment type="similarity">
    <text evidence="22">Belongs to the protein kinase superfamily. CAMK Ser/Thr protein kinase family. SNF1 subfamily.</text>
</comment>
<comment type="sequence caution" evidence="22">
    <conflict type="erroneous termination">
        <sequence resource="EMBL-CDS" id="AAD09654"/>
    </conflict>
    <text>Truncated C-terminus.</text>
</comment>
<comment type="sequence caution" evidence="22">
    <conflict type="frameshift">
        <sequence resource="EMBL-CDS" id="AAD09654"/>
    </conflict>
</comment>
<comment type="sequence caution" evidence="22">
    <conflict type="erroneous initiation">
        <sequence resource="EMBL-CDS" id="AAH24291"/>
    </conflict>
    <text>Truncated N-terminus.</text>
</comment>
<feature type="chain" id="PRO_0000085670" description="Serine/threonine-protein kinase BRSK2">
    <location>
        <begin position="1"/>
        <end position="736"/>
    </location>
</feature>
<feature type="domain" description="Protein kinase" evidence="4">
    <location>
        <begin position="19"/>
        <end position="270"/>
    </location>
</feature>
<feature type="domain" description="UBA">
    <location>
        <begin position="297"/>
        <end position="339"/>
    </location>
</feature>
<feature type="region of interest" description="Disordered" evidence="6">
    <location>
        <begin position="345"/>
        <end position="475"/>
    </location>
</feature>
<feature type="region of interest" description="Disordered" evidence="6">
    <location>
        <begin position="493"/>
        <end position="513"/>
    </location>
</feature>
<feature type="region of interest" description="Disordered" evidence="6">
    <location>
        <begin position="681"/>
        <end position="736"/>
    </location>
</feature>
<feature type="short sequence motif" description="KEN box">
    <location>
        <begin position="603"/>
        <end position="605"/>
    </location>
</feature>
<feature type="compositionally biased region" description="Basic and acidic residues" evidence="6">
    <location>
        <begin position="345"/>
        <end position="366"/>
    </location>
</feature>
<feature type="compositionally biased region" description="Low complexity" evidence="6">
    <location>
        <begin position="410"/>
        <end position="428"/>
    </location>
</feature>
<feature type="compositionally biased region" description="Pro residues" evidence="6">
    <location>
        <begin position="431"/>
        <end position="445"/>
    </location>
</feature>
<feature type="compositionally biased region" description="Low complexity" evidence="6">
    <location>
        <begin position="699"/>
        <end position="708"/>
    </location>
</feature>
<feature type="active site" description="Proton acceptor" evidence="4 5">
    <location>
        <position position="141"/>
    </location>
</feature>
<feature type="binding site" evidence="4">
    <location>
        <begin position="25"/>
        <end position="33"/>
    </location>
    <ligand>
        <name>ATP</name>
        <dbReference type="ChEBI" id="CHEBI:30616"/>
    </ligand>
</feature>
<feature type="binding site" evidence="4">
    <location>
        <position position="48"/>
    </location>
    <ligand>
        <name>ATP</name>
        <dbReference type="ChEBI" id="CHEBI:30616"/>
    </ligand>
</feature>
<feature type="modified residue" description="Phosphothreonine; by LKB1" evidence="7 9">
    <location>
        <position position="174"/>
    </location>
</feature>
<feature type="modified residue" description="Phosphothreonine; by PKA" evidence="8">
    <location>
        <position position="260"/>
    </location>
</feature>
<feature type="modified residue" description="Phosphoserine" evidence="2">
    <location>
        <position position="294"/>
    </location>
</feature>
<feature type="modified residue" description="Phosphoserine" evidence="23">
    <location>
        <position position="367"/>
    </location>
</feature>
<feature type="modified residue" description="Phosphoserine" evidence="23 24">
    <location>
        <position position="382"/>
    </location>
</feature>
<feature type="modified residue" description="Phosphoserine" evidence="23 24">
    <location>
        <position position="393"/>
    </location>
</feature>
<feature type="modified residue" description="Phosphoserine" evidence="24">
    <location>
        <position position="412"/>
    </location>
</feature>
<feature type="modified residue" description="Phosphoserine" evidence="3">
    <location>
        <position position="423"/>
    </location>
</feature>
<feature type="modified residue" description="Phosphoserine" evidence="3">
    <location>
        <position position="427"/>
    </location>
</feature>
<feature type="modified residue" description="Phosphoserine" evidence="3">
    <location>
        <position position="455"/>
    </location>
</feature>
<feature type="modified residue" description="Phosphothreonine" evidence="3">
    <location>
        <position position="459"/>
    </location>
</feature>
<feature type="modified residue" description="Phosphothreonine" evidence="3">
    <location>
        <position position="463"/>
    </location>
</feature>
<feature type="modified residue" description="Phosphothreonine" evidence="24">
    <location>
        <position position="509"/>
    </location>
</feature>
<feature type="modified residue" description="Phosphoserine" evidence="3">
    <location>
        <position position="512"/>
    </location>
</feature>
<feature type="modified residue" description="Phosphoserine" evidence="3">
    <location>
        <position position="513"/>
    </location>
</feature>
<feature type="modified residue" description="Phosphoserine" evidence="3">
    <location>
        <position position="520"/>
    </location>
</feature>
<feature type="splice variant" id="VSP_055679" description="In isoform 6." evidence="22">
    <location>
        <begin position="1"/>
        <end position="60"/>
    </location>
</feature>
<feature type="splice variant" id="VSP_022603" description="In isoform 5." evidence="22">
    <original>MTSTGKDGGAQHAQYVGPYRLEKTLGKGQT</original>
    <variation>MSPEGHPSRWARPRRPCICPSSLCSPREPRSGPAVGRGGAAHHRVPAGHTPGPQLLQPHLHLPQGQTWLCLQPSPA</variation>
    <location>
        <begin position="1"/>
        <end position="30"/>
    </location>
</feature>
<feature type="splice variant" id="VSP_013945" description="In isoform 4." evidence="19">
    <original>Q</original>
    <variation>QSKAMFSKSLDIAEAHPQFSKED</variation>
    <location>
        <position position="408"/>
    </location>
</feature>
<feature type="splice variant" id="VSP_008154" description="In isoform 2, isoform 4 and isoform 6." evidence="17 18 19 21">
    <original>DTTNCMEMMTGRLSKCGSPLSNFFDVIK</original>
    <variation>EPPPPAPGLSWGAGLKGQKVATSYESSL</variation>
    <location>
        <begin position="647"/>
        <end position="674"/>
    </location>
</feature>
<feature type="splice variant" id="VSP_022604" description="In isoform 5." evidence="22">
    <location>
        <begin position="663"/>
        <end position="678"/>
    </location>
</feature>
<feature type="splice variant" id="VSP_008156" description="In isoform 3." evidence="20 21">
    <original>SPLSN</original>
    <variation>IIPKS</variation>
    <location>
        <begin position="664"/>
        <end position="668"/>
    </location>
</feature>
<feature type="splice variant" id="VSP_008157" description="In isoform 3." evidence="20 21">
    <location>
        <begin position="669"/>
        <end position="736"/>
    </location>
</feature>
<feature type="splice variant" id="VSP_008155" description="In isoform 2, isoform 4 and isoform 6." evidence="17 18 19 21">
    <location>
        <begin position="675"/>
        <end position="736"/>
    </location>
</feature>
<feature type="mutagenesis site" description="Loss of catalytic activity. Causes disintegration of actin stress fibers." evidence="14 15">
    <original>K</original>
    <variation>M</variation>
    <location>
        <position position="48"/>
    </location>
</feature>
<feature type="mutagenesis site" description="Prevents phosphorylation and activation by STK11/LKB1 complex." evidence="7 9 15">
    <original>T</original>
    <variation>A</variation>
    <location>
        <position position="174"/>
    </location>
</feature>
<feature type="mutagenesis site" description="Constitutively activated." evidence="7 9 15">
    <original>T</original>
    <variation>E</variation>
    <location>
        <position position="174"/>
    </location>
</feature>
<feature type="mutagenesis site" description="Decreased phosphorylation. Nearly abolishes stimulation of insulin secretion." evidence="8 14">
    <original>T</original>
    <variation>A</variation>
    <location>
        <position position="260"/>
    </location>
</feature>
<feature type="mutagenesis site" description="Decreased activation of kinase activity." evidence="9">
    <original>G</original>
    <variation>A</variation>
    <location>
        <position position="310"/>
    </location>
</feature>
<feature type="mutagenesis site" description="Constitutively activated. Promotes formation of actin stress fibers." evidence="14">
    <original>T</original>
    <variation>A</variation>
    <location>
        <position position="443"/>
    </location>
</feature>
<feature type="sequence conflict" description="In Ref. 2; AAP97723/AAP97724/AAP97725/AAP97726/AAP97727/AAN87839 and 5; CAA07196." evidence="22" ref="2 5">
    <original>I</original>
    <variation>S</variation>
    <location>
        <position position="251"/>
    </location>
</feature>
<feature type="sequence conflict" description="In Ref. 3; BAG53761." evidence="22" ref="3">
    <original>R</original>
    <variation>G</variation>
    <location>
        <position position="409"/>
    </location>
</feature>
<feature type="modified residue" description="Phosphoserine" evidence="23">
    <location sequence="Q8IWQ3-4">
        <position position="416"/>
    </location>
</feature>
<evidence type="ECO:0000250" key="1"/>
<evidence type="ECO:0000250" key="2">
    <source>
        <dbReference type="UniProtKB" id="D3ZML2"/>
    </source>
</evidence>
<evidence type="ECO:0000250" key="3">
    <source>
        <dbReference type="UniProtKB" id="Q69Z98"/>
    </source>
</evidence>
<evidence type="ECO:0000255" key="4">
    <source>
        <dbReference type="PROSITE-ProRule" id="PRU00159"/>
    </source>
</evidence>
<evidence type="ECO:0000255" key="5">
    <source>
        <dbReference type="PROSITE-ProRule" id="PRU10027"/>
    </source>
</evidence>
<evidence type="ECO:0000256" key="6">
    <source>
        <dbReference type="SAM" id="MobiDB-lite"/>
    </source>
</evidence>
<evidence type="ECO:0000269" key="7">
    <source>
    </source>
</evidence>
<evidence type="ECO:0000269" key="8">
    <source>
    </source>
</evidence>
<evidence type="ECO:0000269" key="9">
    <source>
    </source>
</evidence>
<evidence type="ECO:0000269" key="10">
    <source>
    </source>
</evidence>
<evidence type="ECO:0000269" key="11">
    <source>
    </source>
</evidence>
<evidence type="ECO:0000269" key="12">
    <source>
    </source>
</evidence>
<evidence type="ECO:0000269" key="13">
    <source>
    </source>
</evidence>
<evidence type="ECO:0000269" key="14">
    <source>
    </source>
</evidence>
<evidence type="ECO:0000269" key="15">
    <source>
    </source>
</evidence>
<evidence type="ECO:0000269" key="16">
    <source>
    </source>
</evidence>
<evidence type="ECO:0000303" key="17">
    <source>
    </source>
</evidence>
<evidence type="ECO:0000303" key="18">
    <source>
    </source>
</evidence>
<evidence type="ECO:0000303" key="19">
    <source>
    </source>
</evidence>
<evidence type="ECO:0000303" key="20">
    <source>
    </source>
</evidence>
<evidence type="ECO:0000303" key="21">
    <source ref="2"/>
</evidence>
<evidence type="ECO:0000305" key="22"/>
<evidence type="ECO:0007744" key="23">
    <source>
    </source>
</evidence>
<evidence type="ECO:0007744" key="24">
    <source>
    </source>
</evidence>
<protein>
    <recommendedName>
        <fullName>Serine/threonine-protein kinase BRSK2</fullName>
        <ecNumber>2.7.11.1</ecNumber>
    </recommendedName>
    <alternativeName>
        <fullName>Brain-selective kinase 2</fullName>
        <ecNumber>2.7.11.26</ecNumber>
    </alternativeName>
    <alternativeName>
        <fullName>Brain-specific serine/threonine-protein kinase 2</fullName>
        <shortName>BR serine/threonine-protein kinase 2</shortName>
    </alternativeName>
    <alternativeName>
        <fullName>Serine/threonine-protein kinase 29</fullName>
    </alternativeName>
    <alternativeName>
        <fullName>Serine/threonine-protein kinase SAD-A</fullName>
    </alternativeName>
</protein>
<name>BRSK2_HUMAN</name>